<feature type="transit peptide" description="Mitochondrion" evidence="1">
    <location>
        <begin position="1"/>
        <end position="46"/>
    </location>
</feature>
<feature type="chain" id="PRO_0000435520" description="Protein SENESCENCE-ASSOCIATED GENE 21, mitochondrial">
    <location>
        <begin position="47"/>
        <end position="97"/>
    </location>
</feature>
<feature type="splice variant" id="VSP_058105" description="In isoform 2.">
    <original>MARSISNVKIVSAFVSRELSNAIFR</original>
    <variation>MLSSGK</variation>
    <location>
        <begin position="1"/>
        <end position="25"/>
    </location>
</feature>
<feature type="splice variant" id="VSP_058106" description="In isoform 3.">
    <original>MARSISNVKIVSAFVSRELSNAIF</original>
    <variation>MLSSGKSLLFCFLLYALFFSCSYALFFSKRCRFLCDN</variation>
    <location>
        <begin position="1"/>
        <end position="24"/>
    </location>
</feature>
<keyword id="KW-0025">Alternative splicing</keyword>
<keyword id="KW-0496">Mitochondrion</keyword>
<keyword id="KW-0611">Plant defense</keyword>
<keyword id="KW-1185">Reference proteome</keyword>
<keyword id="KW-0346">Stress response</keyword>
<keyword id="KW-0809">Transit peptide</keyword>
<sequence length="97" mass="10292">MARSISNVKIVSAFVSRELSNAIFRRGYAATAAQGSVSSGGRSGAVASAVMKKKGVEESTQKISWVPDPKTGYYRPETGSNEIDAAELRAALLNNKQ</sequence>
<reference key="1">
    <citation type="journal article" date="2006" name="Plant J.">
        <title>Yeast complementation reveals a role for an Arabidopsis thaliana late embryogenesis abundant (LEA)-like protein in oxidative stress tolerance.</title>
        <authorList>
            <person name="Mowla S.B."/>
            <person name="Cuypers A."/>
            <person name="Driscoll S.P."/>
            <person name="Kiddle G."/>
            <person name="Thomson J."/>
            <person name="Foyer C.H."/>
            <person name="Theodoulou F.L."/>
        </authorList>
    </citation>
    <scope>NUCLEOTIDE SEQUENCE [MRNA] (ISOFORM 1)</scope>
    <scope>FUNCTION</scope>
    <scope>TISSUE SPECIFICITY</scope>
    <scope>INDUCTION BY DARK; OXIDANTS; DEHYDRATION AND ABSCISIC ACID</scope>
    <source>
        <strain>cv. Columbia</strain>
    </source>
</reference>
<reference key="2">
    <citation type="journal article" date="1999" name="Nature">
        <title>Sequence and analysis of chromosome 4 of the plant Arabidopsis thaliana.</title>
        <authorList>
            <person name="Mayer K.F.X."/>
            <person name="Schueller C."/>
            <person name="Wambutt R."/>
            <person name="Murphy G."/>
            <person name="Volckaert G."/>
            <person name="Pohl T."/>
            <person name="Duesterhoeft A."/>
            <person name="Stiekema W."/>
            <person name="Entian K.-D."/>
            <person name="Terryn N."/>
            <person name="Harris B."/>
            <person name="Ansorge W."/>
            <person name="Brandt P."/>
            <person name="Grivell L.A."/>
            <person name="Rieger M."/>
            <person name="Weichselgartner M."/>
            <person name="de Simone V."/>
            <person name="Obermaier B."/>
            <person name="Mache R."/>
            <person name="Mueller M."/>
            <person name="Kreis M."/>
            <person name="Delseny M."/>
            <person name="Puigdomenech P."/>
            <person name="Watson M."/>
            <person name="Schmidtheini T."/>
            <person name="Reichert B."/>
            <person name="Portetelle D."/>
            <person name="Perez-Alonso M."/>
            <person name="Boutry M."/>
            <person name="Bancroft I."/>
            <person name="Vos P."/>
            <person name="Hoheisel J."/>
            <person name="Zimmermann W."/>
            <person name="Wedler H."/>
            <person name="Ridley P."/>
            <person name="Langham S.-A."/>
            <person name="McCullagh B."/>
            <person name="Bilham L."/>
            <person name="Robben J."/>
            <person name="van der Schueren J."/>
            <person name="Grymonprez B."/>
            <person name="Chuang Y.-J."/>
            <person name="Vandenbussche F."/>
            <person name="Braeken M."/>
            <person name="Weltjens I."/>
            <person name="Voet M."/>
            <person name="Bastiaens I."/>
            <person name="Aert R."/>
            <person name="Defoor E."/>
            <person name="Weitzenegger T."/>
            <person name="Bothe G."/>
            <person name="Ramsperger U."/>
            <person name="Hilbert H."/>
            <person name="Braun M."/>
            <person name="Holzer E."/>
            <person name="Brandt A."/>
            <person name="Peters S."/>
            <person name="van Staveren M."/>
            <person name="Dirkse W."/>
            <person name="Mooijman P."/>
            <person name="Klein Lankhorst R."/>
            <person name="Rose M."/>
            <person name="Hauf J."/>
            <person name="Koetter P."/>
            <person name="Berneiser S."/>
            <person name="Hempel S."/>
            <person name="Feldpausch M."/>
            <person name="Lamberth S."/>
            <person name="Van den Daele H."/>
            <person name="De Keyser A."/>
            <person name="Buysshaert C."/>
            <person name="Gielen J."/>
            <person name="Villarroel R."/>
            <person name="De Clercq R."/>
            <person name="van Montagu M."/>
            <person name="Rogers J."/>
            <person name="Cronin A."/>
            <person name="Quail M.A."/>
            <person name="Bray-Allen S."/>
            <person name="Clark L."/>
            <person name="Doggett J."/>
            <person name="Hall S."/>
            <person name="Kay M."/>
            <person name="Lennard N."/>
            <person name="McLay K."/>
            <person name="Mayes R."/>
            <person name="Pettett A."/>
            <person name="Rajandream M.A."/>
            <person name="Lyne M."/>
            <person name="Benes V."/>
            <person name="Rechmann S."/>
            <person name="Borkova D."/>
            <person name="Bloecker H."/>
            <person name="Scharfe M."/>
            <person name="Grimm M."/>
            <person name="Loehnert T.-H."/>
            <person name="Dose S."/>
            <person name="de Haan M."/>
            <person name="Maarse A.C."/>
            <person name="Schaefer M."/>
            <person name="Mueller-Auer S."/>
            <person name="Gabel C."/>
            <person name="Fuchs M."/>
            <person name="Fartmann B."/>
            <person name="Granderath K."/>
            <person name="Dauner D."/>
            <person name="Herzl A."/>
            <person name="Neumann S."/>
            <person name="Argiriou A."/>
            <person name="Vitale D."/>
            <person name="Liguori R."/>
            <person name="Piravandi E."/>
            <person name="Massenet O."/>
            <person name="Quigley F."/>
            <person name="Clabauld G."/>
            <person name="Muendlein A."/>
            <person name="Felber R."/>
            <person name="Schnabl S."/>
            <person name="Hiller R."/>
            <person name="Schmidt W."/>
            <person name="Lecharny A."/>
            <person name="Aubourg S."/>
            <person name="Chefdor F."/>
            <person name="Cooke R."/>
            <person name="Berger C."/>
            <person name="Monfort A."/>
            <person name="Casacuberta E."/>
            <person name="Gibbons T."/>
            <person name="Weber N."/>
            <person name="Vandenbol M."/>
            <person name="Bargues M."/>
            <person name="Terol J."/>
            <person name="Torres A."/>
            <person name="Perez-Perez A."/>
            <person name="Purnelle B."/>
            <person name="Bent E."/>
            <person name="Johnson S."/>
            <person name="Tacon D."/>
            <person name="Jesse T."/>
            <person name="Heijnen L."/>
            <person name="Schwarz S."/>
            <person name="Scholler P."/>
            <person name="Heber S."/>
            <person name="Francs P."/>
            <person name="Bielke C."/>
            <person name="Frishman D."/>
            <person name="Haase D."/>
            <person name="Lemcke K."/>
            <person name="Mewes H.-W."/>
            <person name="Stocker S."/>
            <person name="Zaccaria P."/>
            <person name="Bevan M."/>
            <person name="Wilson R.K."/>
            <person name="de la Bastide M."/>
            <person name="Habermann K."/>
            <person name="Parnell L."/>
            <person name="Dedhia N."/>
            <person name="Gnoj L."/>
            <person name="Schutz K."/>
            <person name="Huang E."/>
            <person name="Spiegel L."/>
            <person name="Sekhon M."/>
            <person name="Murray J."/>
            <person name="Sheet P."/>
            <person name="Cordes M."/>
            <person name="Abu-Threideh J."/>
            <person name="Stoneking T."/>
            <person name="Kalicki J."/>
            <person name="Graves T."/>
            <person name="Harmon G."/>
            <person name="Edwards J."/>
            <person name="Latreille P."/>
            <person name="Courtney L."/>
            <person name="Cloud J."/>
            <person name="Abbott A."/>
            <person name="Scott K."/>
            <person name="Johnson D."/>
            <person name="Minx P."/>
            <person name="Bentley D."/>
            <person name="Fulton B."/>
            <person name="Miller N."/>
            <person name="Greco T."/>
            <person name="Kemp K."/>
            <person name="Kramer J."/>
            <person name="Fulton L."/>
            <person name="Mardis E."/>
            <person name="Dante M."/>
            <person name="Pepin K."/>
            <person name="Hillier L.W."/>
            <person name="Nelson J."/>
            <person name="Spieth J."/>
            <person name="Ryan E."/>
            <person name="Andrews S."/>
            <person name="Geisel C."/>
            <person name="Layman D."/>
            <person name="Du H."/>
            <person name="Ali J."/>
            <person name="Berghoff A."/>
            <person name="Jones K."/>
            <person name="Drone K."/>
            <person name="Cotton M."/>
            <person name="Joshu C."/>
            <person name="Antonoiu B."/>
            <person name="Zidanic M."/>
            <person name="Strong C."/>
            <person name="Sun H."/>
            <person name="Lamar B."/>
            <person name="Yordan C."/>
            <person name="Ma P."/>
            <person name="Zhong J."/>
            <person name="Preston R."/>
            <person name="Vil D."/>
            <person name="Shekher M."/>
            <person name="Matero A."/>
            <person name="Shah R."/>
            <person name="Swaby I.K."/>
            <person name="O'Shaughnessy A."/>
            <person name="Rodriguez M."/>
            <person name="Hoffman J."/>
            <person name="Till S."/>
            <person name="Granat S."/>
            <person name="Shohdy N."/>
            <person name="Hasegawa A."/>
            <person name="Hameed A."/>
            <person name="Lodhi M."/>
            <person name="Johnson A."/>
            <person name="Chen E."/>
            <person name="Marra M.A."/>
            <person name="Martienssen R."/>
            <person name="McCombie W.R."/>
        </authorList>
    </citation>
    <scope>NUCLEOTIDE SEQUENCE [LARGE SCALE GENOMIC DNA]</scope>
    <source>
        <strain>cv. Columbia</strain>
    </source>
</reference>
<reference key="3">
    <citation type="journal article" date="2017" name="Plant J.">
        <title>Araport11: a complete reannotation of the Arabidopsis thaliana reference genome.</title>
        <authorList>
            <person name="Cheng C.Y."/>
            <person name="Krishnakumar V."/>
            <person name="Chan A.P."/>
            <person name="Thibaud-Nissen F."/>
            <person name="Schobel S."/>
            <person name="Town C.D."/>
        </authorList>
    </citation>
    <scope>GENOME REANNOTATION</scope>
    <source>
        <strain>cv. Columbia</strain>
    </source>
</reference>
<reference key="4">
    <citation type="journal article" date="2003" name="Science">
        <title>Empirical analysis of transcriptional activity in the Arabidopsis genome.</title>
        <authorList>
            <person name="Yamada K."/>
            <person name="Lim J."/>
            <person name="Dale J.M."/>
            <person name="Chen H."/>
            <person name="Shinn P."/>
            <person name="Palm C.J."/>
            <person name="Southwick A.M."/>
            <person name="Wu H.C."/>
            <person name="Kim C.J."/>
            <person name="Nguyen M."/>
            <person name="Pham P.K."/>
            <person name="Cheuk R.F."/>
            <person name="Karlin-Newmann G."/>
            <person name="Liu S.X."/>
            <person name="Lam B."/>
            <person name="Sakano H."/>
            <person name="Wu T."/>
            <person name="Yu G."/>
            <person name="Miranda M."/>
            <person name="Quach H.L."/>
            <person name="Tripp M."/>
            <person name="Chang C.H."/>
            <person name="Lee J.M."/>
            <person name="Toriumi M.J."/>
            <person name="Chan M.M."/>
            <person name="Tang C.C."/>
            <person name="Onodera C.S."/>
            <person name="Deng J.M."/>
            <person name="Akiyama K."/>
            <person name="Ansari Y."/>
            <person name="Arakawa T."/>
            <person name="Banh J."/>
            <person name="Banno F."/>
            <person name="Bowser L."/>
            <person name="Brooks S.Y."/>
            <person name="Carninci P."/>
            <person name="Chao Q."/>
            <person name="Choy N."/>
            <person name="Enju A."/>
            <person name="Goldsmith A.D."/>
            <person name="Gurjal M."/>
            <person name="Hansen N.F."/>
            <person name="Hayashizaki Y."/>
            <person name="Johnson-Hopson C."/>
            <person name="Hsuan V.W."/>
            <person name="Iida K."/>
            <person name="Karnes M."/>
            <person name="Khan S."/>
            <person name="Koesema E."/>
            <person name="Ishida J."/>
            <person name="Jiang P.X."/>
            <person name="Jones T."/>
            <person name="Kawai J."/>
            <person name="Kamiya A."/>
            <person name="Meyers C."/>
            <person name="Nakajima M."/>
            <person name="Narusaka M."/>
            <person name="Seki M."/>
            <person name="Sakurai T."/>
            <person name="Satou M."/>
            <person name="Tamse R."/>
            <person name="Vaysberg M."/>
            <person name="Wallender E.K."/>
            <person name="Wong C."/>
            <person name="Yamamura Y."/>
            <person name="Yuan S."/>
            <person name="Shinozaki K."/>
            <person name="Davis R.W."/>
            <person name="Theologis A."/>
            <person name="Ecker J.R."/>
        </authorList>
    </citation>
    <scope>NUCLEOTIDE SEQUENCE [LARGE SCALE MRNA] (ISOFORM 1)</scope>
    <source>
        <strain>cv. Columbia</strain>
    </source>
</reference>
<reference key="5">
    <citation type="journal article" date="2009" name="DNA Res.">
        <title>Analysis of multiple occurrences of alternative splicing events in Arabidopsis thaliana using novel sequenced full-length cDNAs.</title>
        <authorList>
            <person name="Iida K."/>
            <person name="Fukami-Kobayashi K."/>
            <person name="Toyoda A."/>
            <person name="Sakaki Y."/>
            <person name="Kobayashi M."/>
            <person name="Seki M."/>
            <person name="Shinozaki K."/>
        </authorList>
    </citation>
    <scope>NUCLEOTIDE SEQUENCE [LARGE SCALE MRNA] (ISOFORM 3)</scope>
    <source>
        <strain>cv. Columbia</strain>
        <tissue>Rosette leaf</tissue>
    </source>
</reference>
<reference key="6">
    <citation type="submission" date="2002-03" db="EMBL/GenBank/DDBJ databases">
        <title>Full-length cDNA from Arabidopsis thaliana.</title>
        <authorList>
            <person name="Brover V.V."/>
            <person name="Troukhan M.E."/>
            <person name="Alexandrov N.A."/>
            <person name="Lu Y.-P."/>
            <person name="Flavell R.B."/>
            <person name="Feldmann K.A."/>
        </authorList>
    </citation>
    <scope>NUCLEOTIDE SEQUENCE [LARGE SCALE MRNA] (ISOFORM 1)</scope>
</reference>
<reference key="7">
    <citation type="journal article" date="1998" name="Plant Mol. Biol.">
        <title>A comparison of the expression patterns of several senescence-associated genes in response to stress and hormone treatment.</title>
        <authorList>
            <person name="Weaver L.M."/>
            <person name="Gan S."/>
            <person name="Quirino B."/>
            <person name="Amasino R.M."/>
        </authorList>
    </citation>
    <scope>INDUCTION BY ETHYLENE; DARK; DEHYDRATION AND ABSCISIC ACID</scope>
    <scope>DEVELOPMENTAL STAGE</scope>
    <source>
        <strain>cv. Landsberg erecta</strain>
    </source>
</reference>
<reference key="8">
    <citation type="journal article" date="2005" name="Plant Physiol.">
        <title>Premature leaf senescence modulated by the Arabidopsis PHYTOALEXIN DEFICIENT4 gene is associated with defense against the phloem-feeding green peach aphid.</title>
        <authorList>
            <person name="Pegadaraju V."/>
            <person name="Knepper C."/>
            <person name="Reese J."/>
            <person name="Shah J."/>
        </authorList>
    </citation>
    <scope>INDUCTION BY GREEN PEACH APHID</scope>
    <source>
        <strain>cv. Columbia</strain>
    </source>
</reference>
<reference key="9">
    <citation type="journal article" date="2008" name="BMC Genomics">
        <title>LEA (late embryogenesis abundant) proteins and their encoding genes in Arabidopsis thaliana.</title>
        <authorList>
            <person name="Hundertmark M."/>
            <person name="Hincha D.K."/>
        </authorList>
    </citation>
    <scope>GENE FAMILY</scope>
</reference>
<reference key="10">
    <citation type="journal article" date="2008" name="BMC Genomics">
        <title>Differential SAGE analysis in Arabidopsis uncovers increased transcriptome complexity in response to low temperature.</title>
        <authorList>
            <person name="Robinson S.J."/>
            <person name="Parkin I.A."/>
        </authorList>
    </citation>
    <scope>INDUCTION BY COLD</scope>
</reference>
<reference key="11">
    <citation type="journal article" date="2012" name="Plant Cell Environ.">
        <title>A novel function for a redox-related LEA protein (SAG21/AtLEA5) in root development and biotic stress responses.</title>
        <authorList>
            <person name="Salleh F.M."/>
            <person name="Evans K."/>
            <person name="Goodall B."/>
            <person name="Machin H."/>
            <person name="Mowla S.B."/>
            <person name="Mur L.A."/>
            <person name="Runions J."/>
            <person name="Theodoulou F.L."/>
            <person name="Foyer C.H."/>
            <person name="Rogers H.J."/>
        </authorList>
    </citation>
    <scope>FUNCTION</scope>
    <scope>DISRUPTION PHENOTYPE</scope>
    <scope>SUBCELLULAR LOCATION</scope>
    <scope>INDUCTION BY DARK; BIOTIC STRESSES AND ABIOTIC STRESSES</scope>
    <scope>TISSUE SPECIFICITY</scope>
    <scope>DEVELOPMENTAL STAGE</scope>
    <source>
        <strain>cv. Columbia</strain>
    </source>
</reference>
<reference key="12">
    <citation type="journal article" date="2014" name="Plant Cell">
        <title>The ubiquitous distribution of late embryogenesis abundant proteins across cell compartments in Arabidopsis offers tailored protection against abiotic stress.</title>
        <authorList>
            <person name="Candat A."/>
            <person name="Paszkiewicz G."/>
            <person name="Neveu M."/>
            <person name="Gautier R."/>
            <person name="Logan D.C."/>
            <person name="Avelange-Macherel M.-H."/>
            <person name="Macherel D."/>
        </authorList>
    </citation>
    <scope>SUBCELLULAR LOCATION</scope>
    <scope>GENE FAMILY</scope>
    <scope>NOMENCLATURE</scope>
</reference>
<accession>Q93WF6</accession>
<accession>A8MSE1</accession>
<accession>C0Z336</accession>
<accession>O81295</accession>
<name>SAG21_ARATH</name>
<proteinExistence type="evidence at transcript level"/>
<organism>
    <name type="scientific">Arabidopsis thaliana</name>
    <name type="common">Mouse-ear cress</name>
    <dbReference type="NCBI Taxonomy" id="3702"/>
    <lineage>
        <taxon>Eukaryota</taxon>
        <taxon>Viridiplantae</taxon>
        <taxon>Streptophyta</taxon>
        <taxon>Embryophyta</taxon>
        <taxon>Tracheophyta</taxon>
        <taxon>Spermatophyta</taxon>
        <taxon>Magnoliopsida</taxon>
        <taxon>eudicotyledons</taxon>
        <taxon>Gunneridae</taxon>
        <taxon>Pentapetalae</taxon>
        <taxon>rosids</taxon>
        <taxon>malvids</taxon>
        <taxon>Brassicales</taxon>
        <taxon>Brassicaceae</taxon>
        <taxon>Camelineae</taxon>
        <taxon>Arabidopsis</taxon>
    </lineage>
</organism>
<dbReference type="EMBL" id="AY879295">
    <property type="protein sequence ID" value="AAW72736.1"/>
    <property type="molecule type" value="mRNA"/>
</dbReference>
<dbReference type="EMBL" id="AF069298">
    <property type="protein sequence ID" value="AAC19273.1"/>
    <property type="status" value="ALT_SEQ"/>
    <property type="molecule type" value="Genomic_DNA"/>
</dbReference>
<dbReference type="EMBL" id="AL161494">
    <property type="protein sequence ID" value="CAB80731.1"/>
    <property type="status" value="ALT_SEQ"/>
    <property type="molecule type" value="Genomic_DNA"/>
</dbReference>
<dbReference type="EMBL" id="CP002687">
    <property type="protein sequence ID" value="AEE82161.1"/>
    <property type="molecule type" value="Genomic_DNA"/>
</dbReference>
<dbReference type="EMBL" id="CP002687">
    <property type="protein sequence ID" value="AEE82162.1"/>
    <property type="molecule type" value="Genomic_DNA"/>
</dbReference>
<dbReference type="EMBL" id="AF410301">
    <property type="protein sequence ID" value="AAK95287.1"/>
    <property type="molecule type" value="mRNA"/>
</dbReference>
<dbReference type="EMBL" id="AY039589">
    <property type="protein sequence ID" value="AAK62644.1"/>
    <property type="molecule type" value="mRNA"/>
</dbReference>
<dbReference type="EMBL" id="AY052672">
    <property type="protein sequence ID" value="AAK96576.1"/>
    <property type="molecule type" value="mRNA"/>
</dbReference>
<dbReference type="EMBL" id="AY054147">
    <property type="protein sequence ID" value="AAL06808.1"/>
    <property type="molecule type" value="mRNA"/>
</dbReference>
<dbReference type="EMBL" id="AK319000">
    <property type="protein sequence ID" value="BAH57115.1"/>
    <property type="molecule type" value="mRNA"/>
</dbReference>
<dbReference type="EMBL" id="AY086267">
    <property type="protein sequence ID" value="AAM64340.1"/>
    <property type="molecule type" value="mRNA"/>
</dbReference>
<dbReference type="PIR" id="T01312">
    <property type="entry name" value="T01312"/>
</dbReference>
<dbReference type="RefSeq" id="NP_001078346.1">
    <molecule id="Q93WF6-2"/>
    <property type="nucleotide sequence ID" value="NM_001084877.1"/>
</dbReference>
<dbReference type="RefSeq" id="NP_567231.1">
    <molecule id="Q93WF6-1"/>
    <property type="nucleotide sequence ID" value="NM_116471.4"/>
</dbReference>
<dbReference type="FunCoup" id="Q93WF6">
    <property type="interactions" value="390"/>
</dbReference>
<dbReference type="STRING" id="3702.Q93WF6"/>
<dbReference type="PaxDb" id="3702-AT4G02380.1"/>
<dbReference type="ProteomicsDB" id="226640">
    <molecule id="Q93WF6-1"/>
</dbReference>
<dbReference type="EnsemblPlants" id="AT4G02380.1">
    <molecule id="Q93WF6-1"/>
    <property type="protein sequence ID" value="AT4G02380.1"/>
    <property type="gene ID" value="AT4G02380"/>
</dbReference>
<dbReference type="EnsemblPlants" id="AT4G02380.2">
    <molecule id="Q93WF6-2"/>
    <property type="protein sequence ID" value="AT4G02380.2"/>
    <property type="gene ID" value="AT4G02380"/>
</dbReference>
<dbReference type="GeneID" id="828053"/>
<dbReference type="Gramene" id="AT4G02380.1">
    <molecule id="Q93WF6-1"/>
    <property type="protein sequence ID" value="AT4G02380.1"/>
    <property type="gene ID" value="AT4G02380"/>
</dbReference>
<dbReference type="Gramene" id="AT4G02380.2">
    <molecule id="Q93WF6-2"/>
    <property type="protein sequence ID" value="AT4G02380.2"/>
    <property type="gene ID" value="AT4G02380"/>
</dbReference>
<dbReference type="KEGG" id="ath:AT4G02380"/>
<dbReference type="Araport" id="AT4G02380"/>
<dbReference type="TAIR" id="AT4G02380">
    <property type="gene designation" value="SAG21"/>
</dbReference>
<dbReference type="eggNOG" id="ENOG502S70H">
    <property type="taxonomic scope" value="Eukaryota"/>
</dbReference>
<dbReference type="HOGENOM" id="CLU_158380_1_1_1"/>
<dbReference type="InParanoid" id="Q93WF6"/>
<dbReference type="OrthoDB" id="1936089at2759"/>
<dbReference type="PhylomeDB" id="Q93WF6"/>
<dbReference type="PRO" id="PR:Q93WF6"/>
<dbReference type="Proteomes" id="UP000006548">
    <property type="component" value="Chromosome 4"/>
</dbReference>
<dbReference type="ExpressionAtlas" id="Q93WF6">
    <property type="expression patterns" value="baseline and differential"/>
</dbReference>
<dbReference type="GO" id="GO:0005739">
    <property type="term" value="C:mitochondrion"/>
    <property type="evidence" value="ECO:0000314"/>
    <property type="project" value="UniProtKB"/>
</dbReference>
<dbReference type="GO" id="GO:0042631">
    <property type="term" value="P:cellular response to water deprivation"/>
    <property type="evidence" value="ECO:0000270"/>
    <property type="project" value="TAIR"/>
</dbReference>
<dbReference type="GO" id="GO:0006952">
    <property type="term" value="P:defense response"/>
    <property type="evidence" value="ECO:0007669"/>
    <property type="project" value="UniProtKB-KW"/>
</dbReference>
<dbReference type="GO" id="GO:0010150">
    <property type="term" value="P:leaf senescence"/>
    <property type="evidence" value="ECO:0000270"/>
    <property type="project" value="UniProtKB"/>
</dbReference>
<dbReference type="GO" id="GO:1900424">
    <property type="term" value="P:regulation of defense response to bacterium"/>
    <property type="evidence" value="ECO:0000315"/>
    <property type="project" value="UniProtKB"/>
</dbReference>
<dbReference type="GO" id="GO:1900150">
    <property type="term" value="P:regulation of defense response to fungus"/>
    <property type="evidence" value="ECO:0000315"/>
    <property type="project" value="UniProtKB"/>
</dbReference>
<dbReference type="GO" id="GO:1900055">
    <property type="term" value="P:regulation of leaf senescence"/>
    <property type="evidence" value="ECO:0000315"/>
    <property type="project" value="UniProtKB"/>
</dbReference>
<dbReference type="GO" id="GO:2000028">
    <property type="term" value="P:regulation of photoperiodism, flowering"/>
    <property type="evidence" value="ECO:0000315"/>
    <property type="project" value="UniProtKB"/>
</dbReference>
<dbReference type="GO" id="GO:0009737">
    <property type="term" value="P:response to abscisic acid"/>
    <property type="evidence" value="ECO:0000270"/>
    <property type="project" value="UniProtKB"/>
</dbReference>
<dbReference type="GO" id="GO:0009646">
    <property type="term" value="P:response to absence of light"/>
    <property type="evidence" value="ECO:0000270"/>
    <property type="project" value="UniProtKB"/>
</dbReference>
<dbReference type="GO" id="GO:0009409">
    <property type="term" value="P:response to cold"/>
    <property type="evidence" value="ECO:0000270"/>
    <property type="project" value="UniProtKB"/>
</dbReference>
<dbReference type="GO" id="GO:0009723">
    <property type="term" value="P:response to ethylene"/>
    <property type="evidence" value="ECO:0000270"/>
    <property type="project" value="UniProtKB"/>
</dbReference>
<dbReference type="GO" id="GO:0009620">
    <property type="term" value="P:response to fungus"/>
    <property type="evidence" value="ECO:0000270"/>
    <property type="project" value="UniProtKB"/>
</dbReference>
<dbReference type="GO" id="GO:0042542">
    <property type="term" value="P:response to hydrogen peroxide"/>
    <property type="evidence" value="ECO:0000270"/>
    <property type="project" value="UniProtKB"/>
</dbReference>
<dbReference type="GO" id="GO:0009625">
    <property type="term" value="P:response to insect"/>
    <property type="evidence" value="ECO:0000270"/>
    <property type="project" value="UniProtKB"/>
</dbReference>
<dbReference type="GO" id="GO:0009416">
    <property type="term" value="P:response to light stimulus"/>
    <property type="evidence" value="ECO:0000270"/>
    <property type="project" value="UniProtKB"/>
</dbReference>
<dbReference type="GO" id="GO:0006979">
    <property type="term" value="P:response to oxidative stress"/>
    <property type="evidence" value="ECO:0000315"/>
    <property type="project" value="TAIR"/>
</dbReference>
<dbReference type="GO" id="GO:0000302">
    <property type="term" value="P:response to reactive oxygen species"/>
    <property type="evidence" value="ECO:0000270"/>
    <property type="project" value="TAIR"/>
</dbReference>
<dbReference type="GO" id="GO:1902074">
    <property type="term" value="P:response to salt"/>
    <property type="evidence" value="ECO:0000270"/>
    <property type="project" value="UniProtKB"/>
</dbReference>
<dbReference type="GO" id="GO:0009414">
    <property type="term" value="P:response to water deprivation"/>
    <property type="evidence" value="ECO:0000270"/>
    <property type="project" value="UniProtKB"/>
</dbReference>
<dbReference type="GO" id="GO:0009611">
    <property type="term" value="P:response to wounding"/>
    <property type="evidence" value="ECO:0000270"/>
    <property type="project" value="UniProtKB"/>
</dbReference>
<dbReference type="GO" id="GO:0048364">
    <property type="term" value="P:root development"/>
    <property type="evidence" value="ECO:0000315"/>
    <property type="project" value="UniProtKB"/>
</dbReference>
<dbReference type="InterPro" id="IPR004926">
    <property type="entry name" value="LEA_3a"/>
</dbReference>
<dbReference type="PANTHER" id="PTHR33509">
    <property type="entry name" value="LATE EMBRYOGENIS ABUNDANT PROTEIN 2-RELATED"/>
    <property type="match status" value="1"/>
</dbReference>
<dbReference type="PANTHER" id="PTHR33509:SF5">
    <property type="entry name" value="PROTEIN SENESCENCE-ASSOCIATED GENE 21, MITOCHONDRIAL"/>
    <property type="match status" value="1"/>
</dbReference>
<dbReference type="Pfam" id="PF03242">
    <property type="entry name" value="LEA_3a"/>
    <property type="match status" value="1"/>
</dbReference>
<evidence type="ECO:0000255" key="1"/>
<evidence type="ECO:0000269" key="2">
    <source>
    </source>
</evidence>
<evidence type="ECO:0000269" key="3">
    <source>
    </source>
</evidence>
<evidence type="ECO:0000269" key="4">
    <source>
    </source>
</evidence>
<evidence type="ECO:0000269" key="5">
    <source>
    </source>
</evidence>
<evidence type="ECO:0000269" key="6">
    <source>
    </source>
</evidence>
<evidence type="ECO:0000269" key="7">
    <source>
    </source>
</evidence>
<evidence type="ECO:0000303" key="8">
    <source>
    </source>
</evidence>
<evidence type="ECO:0000303" key="9">
    <source>
    </source>
</evidence>
<evidence type="ECO:0000303" key="10">
    <source>
    </source>
</evidence>
<evidence type="ECO:0000305" key="11"/>
<evidence type="ECO:0000312" key="12">
    <source>
        <dbReference type="Araport" id="AT4G02380"/>
    </source>
</evidence>
<evidence type="ECO:0000312" key="13">
    <source>
        <dbReference type="EMBL" id="AAC19273.1"/>
    </source>
</evidence>
<gene>
    <name evidence="10" type="primary">SAG21</name>
    <name evidence="9" type="synonym">LEA38</name>
    <name evidence="8" type="synonym">LEA5</name>
    <name evidence="12" type="ordered locus">At4g02380</name>
    <name evidence="13" type="ORF">T14P8.2</name>
</gene>
<comment type="function">
    <text evidence="3 5">Mediates tolerance to oxidative stresses (e.g. hydrogen peroxide H(2)O(2), diamide, menadione and tert-butyl hydroperoxide) by minimizing the negative effects of oxidation and monitoring photosynthesis during stress (PubMed:17092320). Promotes root development. Prevents premature aging (e.g. senescence and flowering). Involved in resistance against compatible pathogens such as Botrytis cinerea and Pseudomonas syringae pv. tomato (PubMed:21736589).</text>
</comment>
<comment type="subcellular location">
    <subcellularLocation>
        <location evidence="5 6">Mitochondrion</location>
    </subcellularLocation>
</comment>
<comment type="alternative products">
    <event type="alternative splicing"/>
    <isoform>
        <id>Q93WF6-1</id>
        <name>1</name>
        <sequence type="displayed"/>
    </isoform>
    <isoform>
        <id>Q93WF6-2</id>
        <name>2</name>
        <sequence type="described" ref="VSP_058105"/>
    </isoform>
    <isoform>
        <id>Q93WF6-3</id>
        <name>3</name>
        <sequence type="described" ref="VSP_058106"/>
    </isoform>
</comment>
<comment type="tissue specificity">
    <text evidence="3 5">Expressed in roots, stems leaves and flowers, but not in seeds (PubMed:17092320). In short days, observed in cotyledons and roots but absent from rosette leaves (PubMed:21736589).</text>
</comment>
<comment type="developmental stage">
    <text evidence="5 7">Accumulates and reach a peak shortly before full senescence, at the interface between the green and yellow regions of senescent leaves, and then declines (PubMed:21736589, PubMed:9617813). In flowers, restricted to the pollen and very weak expression in petal veins. In dark-treated seedlings, strongly expressed throughout the root tissues, including root hairs, except in primary and lateral root tips (PubMed:21736589).</text>
</comment>
<comment type="induction">
    <text evidence="2 3 4 5 7">In short-day conditions, follows a diurnal pattern of regulation, with transcription repression in the light and activation in the dark (PubMed:17092320, PubMed:21736589, PubMed:9617813). Induced by oxidants (e.g. hydrogen peroxide H(2)O(2), menadione and paraquat) (PubMed:17092320, PubMed:21736589). Accumulates in response to abscisic acid (ABA) and dehydration (PubMed:17092320, PubMed:21736589, PubMed:9617813). Induced by ethylene, more strongly in the younger leaves than in the older ones (PubMed:9617813). Up-regulated 12 h postinfestation (hpi) in green peach aphid (GPA; Myzus persicae Sulzer) infested leaves (PubMed:16299172). Triggered by cold, wounding and salt (PubMed:18808718, PubMed:21736589). Strongly induced by the necrotrophic fungal pathogen Botrytis cinerea (PubMed:21736589).</text>
</comment>
<comment type="disruption phenotype">
    <text evidence="5">Early flowering and senescence, as well as reduced shoot biomass. Short primary root with reduced lateral root formation and short root hairs. Enhanced sensitivity to the fungal nectroph, Botrytis cinerea and to the virulent bacterial pathogen Pseudomonas syringae pv. tomato, but normal resistance to an avirulent P.syringae strain.</text>
</comment>
<comment type="similarity">
    <text evidence="11">Belongs to the LEA type 3 family.</text>
</comment>
<comment type="sequence caution" evidence="11">
    <conflict type="erroneous gene model prediction">
        <sequence resource="EMBL-CDS" id="AAC19273"/>
    </conflict>
</comment>
<comment type="sequence caution" evidence="11">
    <conflict type="erroneous gene model prediction">
        <sequence resource="EMBL-CDS" id="CAB80731"/>
    </conflict>
</comment>
<protein>
    <recommendedName>
        <fullName evidence="10">Protein SENESCENCE-ASSOCIATED GENE 21, mitochondrial</fullName>
    </recommendedName>
    <alternativeName>
        <fullName evidence="8">Late embryogenesis abundant like 5</fullName>
        <shortName evidence="8">AtLEA5</shortName>
    </alternativeName>
    <alternativeName>
        <fullName evidence="9">Late embryogenis abundant protein 38</fullName>
    </alternativeName>
</protein>